<name>TSGA_SALG2</name>
<organism>
    <name type="scientific">Salmonella gallinarum (strain 287/91 / NCTC 13346)</name>
    <dbReference type="NCBI Taxonomy" id="550538"/>
    <lineage>
        <taxon>Bacteria</taxon>
        <taxon>Pseudomonadati</taxon>
        <taxon>Pseudomonadota</taxon>
        <taxon>Gammaproteobacteria</taxon>
        <taxon>Enterobacterales</taxon>
        <taxon>Enterobacteriaceae</taxon>
        <taxon>Salmonella</taxon>
    </lineage>
</organism>
<proteinExistence type="inferred from homology"/>
<keyword id="KW-0997">Cell inner membrane</keyword>
<keyword id="KW-1003">Cell membrane</keyword>
<keyword id="KW-0472">Membrane</keyword>
<keyword id="KW-0812">Transmembrane</keyword>
<keyword id="KW-1133">Transmembrane helix</keyword>
<accession>B5R7P0</accession>
<gene>
    <name evidence="1" type="primary">tsgA</name>
    <name type="ordered locus">SG3966</name>
</gene>
<feature type="chain" id="PRO_1000136148" description="Protein TsgA">
    <location>
        <begin position="1"/>
        <end position="393"/>
    </location>
</feature>
<feature type="transmembrane region" description="Helical" evidence="1">
    <location>
        <begin position="11"/>
        <end position="31"/>
    </location>
</feature>
<feature type="transmembrane region" description="Helical" evidence="1">
    <location>
        <begin position="51"/>
        <end position="71"/>
    </location>
</feature>
<feature type="transmembrane region" description="Helical" evidence="1">
    <location>
        <begin position="78"/>
        <end position="98"/>
    </location>
</feature>
<feature type="transmembrane region" description="Helical" evidence="1">
    <location>
        <begin position="101"/>
        <end position="121"/>
    </location>
</feature>
<feature type="transmembrane region" description="Helical" evidence="1">
    <location>
        <begin position="134"/>
        <end position="154"/>
    </location>
</feature>
<feature type="transmembrane region" description="Helical" evidence="1">
    <location>
        <begin position="162"/>
        <end position="182"/>
    </location>
</feature>
<feature type="transmembrane region" description="Helical" evidence="1">
    <location>
        <begin position="206"/>
        <end position="226"/>
    </location>
</feature>
<feature type="transmembrane region" description="Helical" evidence="1">
    <location>
        <begin position="245"/>
        <end position="265"/>
    </location>
</feature>
<feature type="transmembrane region" description="Helical" evidence="1">
    <location>
        <begin position="273"/>
        <end position="293"/>
    </location>
</feature>
<feature type="transmembrane region" description="Helical" evidence="1">
    <location>
        <begin position="298"/>
        <end position="318"/>
    </location>
</feature>
<feature type="transmembrane region" description="Helical" evidence="1">
    <location>
        <begin position="332"/>
        <end position="352"/>
    </location>
</feature>
<feature type="transmembrane region" description="Helical" evidence="1">
    <location>
        <begin position="361"/>
        <end position="381"/>
    </location>
</feature>
<evidence type="ECO:0000255" key="1">
    <source>
        <dbReference type="HAMAP-Rule" id="MF_01044"/>
    </source>
</evidence>
<sequence length="393" mass="43188">MTNSNRIKLTWISFLSYALTGALVIVTGMVMGNIADYFHLPVSSMSNTFTFLNAGILISIFLNAWLMEIVPLKTQLRFGFILMVLAVAGLMFSHSLALFSAAMFVLGLVSGITMSIGTFLITQLYEGRQRGSRLLFTDSFFSMAGMIFPMVAAFLLARSIEWYWVYACIGLVYLAIFILTFGCEFPALGKHAQHSQAPVAKEKWGIGVLFLAVAALCYILGQLGFISWVPEYAKGLGMSLNDAGALVSDFWMSYMFGMWAFSFILRFFDLQRILTVLAGMAAVLMYLFITGTQAHMPWFILTLGFFSSAIYTSIITLGSQQTKVASPKLVNFILTCGTIGTMLTFVVTGPIVAHRGPQAALLTANGLYAVVFVMCFALGFVSRHRQHSAPATH</sequence>
<dbReference type="EMBL" id="AM933173">
    <property type="protein sequence ID" value="CAR39737.1"/>
    <property type="molecule type" value="Genomic_DNA"/>
</dbReference>
<dbReference type="RefSeq" id="WP_000185216.1">
    <property type="nucleotide sequence ID" value="NC_011274.1"/>
</dbReference>
<dbReference type="SMR" id="B5R7P0"/>
<dbReference type="KEGG" id="seg:SG3966"/>
<dbReference type="HOGENOM" id="CLU_056916_0_0_6"/>
<dbReference type="Proteomes" id="UP000008321">
    <property type="component" value="Chromosome"/>
</dbReference>
<dbReference type="GO" id="GO:0005886">
    <property type="term" value="C:plasma membrane"/>
    <property type="evidence" value="ECO:0007669"/>
    <property type="project" value="UniProtKB-SubCell"/>
</dbReference>
<dbReference type="GO" id="GO:0022857">
    <property type="term" value="F:transmembrane transporter activity"/>
    <property type="evidence" value="ECO:0007669"/>
    <property type="project" value="InterPro"/>
</dbReference>
<dbReference type="FunFam" id="1.20.1250.20:FF:000032">
    <property type="entry name" value="Protein TsgA"/>
    <property type="match status" value="1"/>
</dbReference>
<dbReference type="FunFam" id="1.20.1250.20:FF:000052">
    <property type="entry name" value="Protein TsgA"/>
    <property type="match status" value="1"/>
</dbReference>
<dbReference type="Gene3D" id="1.20.1250.20">
    <property type="entry name" value="MFS general substrate transporter like domains"/>
    <property type="match status" value="2"/>
</dbReference>
<dbReference type="HAMAP" id="MF_01044">
    <property type="entry name" value="MFS_TsgA"/>
    <property type="match status" value="1"/>
</dbReference>
<dbReference type="InterPro" id="IPR011701">
    <property type="entry name" value="MFS"/>
</dbReference>
<dbReference type="InterPro" id="IPR020846">
    <property type="entry name" value="MFS_dom"/>
</dbReference>
<dbReference type="InterPro" id="IPR036259">
    <property type="entry name" value="MFS_trans_sf"/>
</dbReference>
<dbReference type="InterPro" id="IPR023528">
    <property type="entry name" value="MFS_TsgA"/>
</dbReference>
<dbReference type="InterPro" id="IPR050375">
    <property type="entry name" value="MFS_TsgA-like"/>
</dbReference>
<dbReference type="NCBIfam" id="NF002982">
    <property type="entry name" value="PRK03699.1"/>
    <property type="match status" value="1"/>
</dbReference>
<dbReference type="PANTHER" id="PTHR43702">
    <property type="entry name" value="L-FUCOSE-PROTON SYMPORTER"/>
    <property type="match status" value="1"/>
</dbReference>
<dbReference type="PANTHER" id="PTHR43702:SF3">
    <property type="entry name" value="PROTEIN TSGA"/>
    <property type="match status" value="1"/>
</dbReference>
<dbReference type="Pfam" id="PF07690">
    <property type="entry name" value="MFS_1"/>
    <property type="match status" value="1"/>
</dbReference>
<dbReference type="SUPFAM" id="SSF103473">
    <property type="entry name" value="MFS general substrate transporter"/>
    <property type="match status" value="1"/>
</dbReference>
<dbReference type="PROSITE" id="PS50850">
    <property type="entry name" value="MFS"/>
    <property type="match status" value="1"/>
</dbReference>
<reference key="1">
    <citation type="journal article" date="2008" name="Genome Res.">
        <title>Comparative genome analysis of Salmonella enteritidis PT4 and Salmonella gallinarum 287/91 provides insights into evolutionary and host adaptation pathways.</title>
        <authorList>
            <person name="Thomson N.R."/>
            <person name="Clayton D.J."/>
            <person name="Windhorst D."/>
            <person name="Vernikos G."/>
            <person name="Davidson S."/>
            <person name="Churcher C."/>
            <person name="Quail M.A."/>
            <person name="Stevens M."/>
            <person name="Jones M.A."/>
            <person name="Watson M."/>
            <person name="Barron A."/>
            <person name="Layton A."/>
            <person name="Pickard D."/>
            <person name="Kingsley R.A."/>
            <person name="Bignell A."/>
            <person name="Clark L."/>
            <person name="Harris B."/>
            <person name="Ormond D."/>
            <person name="Abdellah Z."/>
            <person name="Brooks K."/>
            <person name="Cherevach I."/>
            <person name="Chillingworth T."/>
            <person name="Woodward J."/>
            <person name="Norberczak H."/>
            <person name="Lord A."/>
            <person name="Arrowsmith C."/>
            <person name="Jagels K."/>
            <person name="Moule S."/>
            <person name="Mungall K."/>
            <person name="Saunders M."/>
            <person name="Whitehead S."/>
            <person name="Chabalgoity J.A."/>
            <person name="Maskell D."/>
            <person name="Humphreys T."/>
            <person name="Roberts M."/>
            <person name="Barrow P.A."/>
            <person name="Dougan G."/>
            <person name="Parkhill J."/>
        </authorList>
    </citation>
    <scope>NUCLEOTIDE SEQUENCE [LARGE SCALE GENOMIC DNA]</scope>
    <source>
        <strain>287/91 / NCTC 13346</strain>
    </source>
</reference>
<protein>
    <recommendedName>
        <fullName evidence="1">Protein TsgA</fullName>
    </recommendedName>
</protein>
<comment type="subcellular location">
    <subcellularLocation>
        <location evidence="1">Cell inner membrane</location>
        <topology evidence="1">Multi-pass membrane protein</topology>
    </subcellularLocation>
</comment>
<comment type="similarity">
    <text evidence="1">Belongs to the major facilitator superfamily. TsgA family.</text>
</comment>